<accession>P10158</accession>
<accession>Q4V8K7</accession>
<feature type="chain" id="PRO_0000076481" description="Fos-related antigen 1">
    <location>
        <begin position="1"/>
        <end position="275"/>
    </location>
</feature>
<feature type="domain" description="bZIP" evidence="5">
    <location>
        <begin position="107"/>
        <end position="170"/>
    </location>
</feature>
<feature type="region of interest" description="Disordered" evidence="6">
    <location>
        <begin position="1"/>
        <end position="33"/>
    </location>
</feature>
<feature type="region of interest" description="Disordered" evidence="6">
    <location>
        <begin position="71"/>
        <end position="115"/>
    </location>
</feature>
<feature type="region of interest" description="Basic motif" evidence="5">
    <location>
        <begin position="109"/>
        <end position="129"/>
    </location>
</feature>
<feature type="region of interest" description="Leucine-zipper" evidence="5">
    <location>
        <begin position="135"/>
        <end position="163"/>
    </location>
</feature>
<feature type="region of interest" description="Disordered" evidence="6">
    <location>
        <begin position="171"/>
        <end position="275"/>
    </location>
</feature>
<feature type="compositionally biased region" description="Low complexity" evidence="6">
    <location>
        <begin position="7"/>
        <end position="33"/>
    </location>
</feature>
<feature type="compositionally biased region" description="Basic and acidic residues" evidence="6">
    <location>
        <begin position="171"/>
        <end position="184"/>
    </location>
</feature>
<feature type="compositionally biased region" description="Low complexity" evidence="6">
    <location>
        <begin position="185"/>
        <end position="194"/>
    </location>
</feature>
<feature type="compositionally biased region" description="Low complexity" evidence="6">
    <location>
        <begin position="219"/>
        <end position="237"/>
    </location>
</feature>
<feature type="compositionally biased region" description="Low complexity" evidence="6">
    <location>
        <begin position="256"/>
        <end position="275"/>
    </location>
</feature>
<feature type="modified residue" description="Phosphoserine" evidence="1">
    <location>
        <position position="269"/>
    </location>
</feature>
<reference key="1">
    <citation type="journal article" date="1988" name="Mol. Cell. Biol.">
        <title>fra-1: a serum-inducible, cellular immediate-early gene that encodes a fos-related antigen.</title>
        <authorList>
            <person name="Cohen D.R."/>
            <person name="Curran T."/>
        </authorList>
    </citation>
    <scope>NUCLEOTIDE SEQUENCE [MRNA]</scope>
    <scope>INDUCTION BY SERUM</scope>
</reference>
<reference key="2">
    <citation type="journal article" date="2004" name="Genome Res.">
        <title>The status, quality, and expansion of the NIH full-length cDNA project: the Mammalian Gene Collection (MGC).</title>
        <authorList>
            <consortium name="The MGC Project Team"/>
        </authorList>
    </citation>
    <scope>NUCLEOTIDE SEQUENCE [LARGE SCALE MRNA]</scope>
    <source>
        <tissue>Placenta</tissue>
    </source>
</reference>
<reference key="3">
    <citation type="journal article" date="1995" name="Mol. Cell. Biol.">
        <title>Transcriptional activation of the fra-1 gene by AP-1 is mediated by regulatory sequences in the first intron.</title>
        <authorList>
            <person name="Bergers G."/>
            <person name="Graninger P."/>
            <person name="Braselmann S."/>
            <person name="Wrighton C."/>
            <person name="Busslinger M."/>
        </authorList>
    </citation>
    <scope>NUCLEOTIDE SEQUENCE [GENOMIC DNA] OF 1-43</scope>
    <source>
        <strain>Sprague-Dawley</strain>
    </source>
</reference>
<protein>
    <recommendedName>
        <fullName>Fos-related antigen 1</fullName>
        <shortName>FRA-1</shortName>
    </recommendedName>
</protein>
<dbReference type="EMBL" id="M19651">
    <property type="protein sequence ID" value="AAA41171.1"/>
    <property type="molecule type" value="mRNA"/>
</dbReference>
<dbReference type="EMBL" id="BC097342">
    <property type="protein sequence ID" value="AAH97342.1"/>
    <property type="molecule type" value="mRNA"/>
</dbReference>
<dbReference type="EMBL" id="U24154">
    <property type="protein sequence ID" value="AAA82045.1"/>
    <property type="molecule type" value="Genomic_DNA"/>
</dbReference>
<dbReference type="PIR" id="A27722">
    <property type="entry name" value="TVRTFR"/>
</dbReference>
<dbReference type="RefSeq" id="NP_037085.1">
    <property type="nucleotide sequence ID" value="NM_012953.2"/>
</dbReference>
<dbReference type="SMR" id="P10158"/>
<dbReference type="CORUM" id="P10158"/>
<dbReference type="DIP" id="DIP-1071N"/>
<dbReference type="FunCoup" id="P10158">
    <property type="interactions" value="869"/>
</dbReference>
<dbReference type="STRING" id="10116.ENSRNOP00000027891"/>
<dbReference type="iPTMnet" id="P10158"/>
<dbReference type="PhosphoSitePlus" id="P10158"/>
<dbReference type="PaxDb" id="10116-ENSRNOP00000027891"/>
<dbReference type="Ensembl" id="ENSRNOT00000027891.3">
    <property type="protein sequence ID" value="ENSRNOP00000027891.1"/>
    <property type="gene ID" value="ENSRNOG00000020552.3"/>
</dbReference>
<dbReference type="GeneID" id="25445"/>
<dbReference type="KEGG" id="rno:25445"/>
<dbReference type="UCSC" id="RGD:2627">
    <property type="organism name" value="rat"/>
</dbReference>
<dbReference type="AGR" id="RGD:2627"/>
<dbReference type="CTD" id="8061"/>
<dbReference type="RGD" id="2627">
    <property type="gene designation" value="Fosl1"/>
</dbReference>
<dbReference type="eggNOG" id="KOG1414">
    <property type="taxonomic scope" value="Eukaryota"/>
</dbReference>
<dbReference type="GeneTree" id="ENSGT00940000160034"/>
<dbReference type="HOGENOM" id="CLU_049742_2_1_1"/>
<dbReference type="InParanoid" id="P10158"/>
<dbReference type="OMA" id="LEPADSC"/>
<dbReference type="OrthoDB" id="91231at9989"/>
<dbReference type="PhylomeDB" id="P10158"/>
<dbReference type="TreeFam" id="TF326301"/>
<dbReference type="PRO" id="PR:P10158"/>
<dbReference type="Proteomes" id="UP000002494">
    <property type="component" value="Chromosome 1"/>
</dbReference>
<dbReference type="Bgee" id="ENSRNOG00000020552">
    <property type="expression patterns" value="Expressed in skeletal muscle tissue and 16 other cell types or tissues"/>
</dbReference>
<dbReference type="GO" id="GO:0005654">
    <property type="term" value="C:nucleoplasm"/>
    <property type="evidence" value="ECO:0000304"/>
    <property type="project" value="Reactome"/>
</dbReference>
<dbReference type="GO" id="GO:0005634">
    <property type="term" value="C:nucleus"/>
    <property type="evidence" value="ECO:0000318"/>
    <property type="project" value="GO_Central"/>
</dbReference>
<dbReference type="GO" id="GO:0042734">
    <property type="term" value="C:presynaptic membrane"/>
    <property type="evidence" value="ECO:0000314"/>
    <property type="project" value="RGD"/>
</dbReference>
<dbReference type="GO" id="GO:0090575">
    <property type="term" value="C:RNA polymerase II transcription regulator complex"/>
    <property type="evidence" value="ECO:0000266"/>
    <property type="project" value="RGD"/>
</dbReference>
<dbReference type="GO" id="GO:0003677">
    <property type="term" value="F:DNA binding"/>
    <property type="evidence" value="ECO:0000314"/>
    <property type="project" value="RGD"/>
</dbReference>
<dbReference type="GO" id="GO:0001228">
    <property type="term" value="F:DNA-binding transcription activator activity, RNA polymerase II-specific"/>
    <property type="evidence" value="ECO:0000314"/>
    <property type="project" value="NTNU_SB"/>
</dbReference>
<dbReference type="GO" id="GO:0000981">
    <property type="term" value="F:DNA-binding transcription factor activity, RNA polymerase II-specific"/>
    <property type="evidence" value="ECO:0000318"/>
    <property type="project" value="GO_Central"/>
</dbReference>
<dbReference type="GO" id="GO:1990841">
    <property type="term" value="F:promoter-specific chromatin binding"/>
    <property type="evidence" value="ECO:0000266"/>
    <property type="project" value="RGD"/>
</dbReference>
<dbReference type="GO" id="GO:0000978">
    <property type="term" value="F:RNA polymerase II cis-regulatory region sequence-specific DNA binding"/>
    <property type="evidence" value="ECO:0000314"/>
    <property type="project" value="NTNU_SB"/>
</dbReference>
<dbReference type="GO" id="GO:0000977">
    <property type="term" value="F:RNA polymerase II transcription regulatory region sequence-specific DNA binding"/>
    <property type="evidence" value="ECO:0000266"/>
    <property type="project" value="RGD"/>
</dbReference>
<dbReference type="GO" id="GO:1990837">
    <property type="term" value="F:sequence-specific double-stranded DNA binding"/>
    <property type="evidence" value="ECO:0000266"/>
    <property type="project" value="RGD"/>
</dbReference>
<dbReference type="GO" id="GO:0019221">
    <property type="term" value="P:cytokine-mediated signaling pathway"/>
    <property type="evidence" value="ECO:0000266"/>
    <property type="project" value="RGD"/>
</dbReference>
<dbReference type="GO" id="GO:0007565">
    <property type="term" value="P:female pregnancy"/>
    <property type="evidence" value="ECO:0000270"/>
    <property type="project" value="RGD"/>
</dbReference>
<dbReference type="GO" id="GO:0010467">
    <property type="term" value="P:gene expression"/>
    <property type="evidence" value="ECO:0000266"/>
    <property type="project" value="RGD"/>
</dbReference>
<dbReference type="GO" id="GO:0001701">
    <property type="term" value="P:in utero embryonic development"/>
    <property type="evidence" value="ECO:0000266"/>
    <property type="project" value="RGD"/>
</dbReference>
<dbReference type="GO" id="GO:0006954">
    <property type="term" value="P:inflammatory response"/>
    <property type="evidence" value="ECO:0000266"/>
    <property type="project" value="RGD"/>
</dbReference>
<dbReference type="GO" id="GO:0007612">
    <property type="term" value="P:learning"/>
    <property type="evidence" value="ECO:0000270"/>
    <property type="project" value="RGD"/>
</dbReference>
<dbReference type="GO" id="GO:0008285">
    <property type="term" value="P:negative regulation of cell population proliferation"/>
    <property type="evidence" value="ECO:0000315"/>
    <property type="project" value="RGD"/>
</dbReference>
<dbReference type="GO" id="GO:0060674">
    <property type="term" value="P:placenta blood vessel development"/>
    <property type="evidence" value="ECO:0000266"/>
    <property type="project" value="RGD"/>
</dbReference>
<dbReference type="GO" id="GO:0043065">
    <property type="term" value="P:positive regulation of apoptotic process"/>
    <property type="evidence" value="ECO:0000315"/>
    <property type="project" value="RGD"/>
</dbReference>
<dbReference type="GO" id="GO:0045787">
    <property type="term" value="P:positive regulation of cell cycle"/>
    <property type="evidence" value="ECO:0000315"/>
    <property type="project" value="RGD"/>
</dbReference>
<dbReference type="GO" id="GO:2000144">
    <property type="term" value="P:positive regulation of DNA-templated transcription initiation"/>
    <property type="evidence" value="ECO:0000266"/>
    <property type="project" value="RGD"/>
</dbReference>
<dbReference type="GO" id="GO:1902895">
    <property type="term" value="P:positive regulation of miRNA transcription"/>
    <property type="evidence" value="ECO:0000266"/>
    <property type="project" value="RGD"/>
</dbReference>
<dbReference type="GO" id="GO:0045944">
    <property type="term" value="P:positive regulation of transcription by RNA polymerase II"/>
    <property type="evidence" value="ECO:0000314"/>
    <property type="project" value="NTNU_SB"/>
</dbReference>
<dbReference type="GO" id="GO:0006357">
    <property type="term" value="P:regulation of transcription by RNA polymerase II"/>
    <property type="evidence" value="ECO:0000318"/>
    <property type="project" value="GO_Central"/>
</dbReference>
<dbReference type="GO" id="GO:0051591">
    <property type="term" value="P:response to cAMP"/>
    <property type="evidence" value="ECO:0000270"/>
    <property type="project" value="RGD"/>
</dbReference>
<dbReference type="GO" id="GO:0051412">
    <property type="term" value="P:response to corticosterone"/>
    <property type="evidence" value="ECO:0000270"/>
    <property type="project" value="RGD"/>
</dbReference>
<dbReference type="GO" id="GO:0034097">
    <property type="term" value="P:response to cytokine"/>
    <property type="evidence" value="ECO:0000270"/>
    <property type="project" value="RGD"/>
</dbReference>
<dbReference type="GO" id="GO:1904321">
    <property type="term" value="P:response to forskolin"/>
    <property type="evidence" value="ECO:0000270"/>
    <property type="project" value="RGD"/>
</dbReference>
<dbReference type="GO" id="GO:0009629">
    <property type="term" value="P:response to gravity"/>
    <property type="evidence" value="ECO:0000270"/>
    <property type="project" value="RGD"/>
</dbReference>
<dbReference type="GO" id="GO:0042542">
    <property type="term" value="P:response to hydrogen peroxide"/>
    <property type="evidence" value="ECO:0000270"/>
    <property type="project" value="RGD"/>
</dbReference>
<dbReference type="GO" id="GO:0009612">
    <property type="term" value="P:response to mechanical stimulus"/>
    <property type="evidence" value="ECO:0000270"/>
    <property type="project" value="RGD"/>
</dbReference>
<dbReference type="GO" id="GO:0032570">
    <property type="term" value="P:response to progesterone"/>
    <property type="evidence" value="ECO:0000270"/>
    <property type="project" value="RGD"/>
</dbReference>
<dbReference type="GO" id="GO:0009611">
    <property type="term" value="P:response to wounding"/>
    <property type="evidence" value="ECO:0000266"/>
    <property type="project" value="RGD"/>
</dbReference>
<dbReference type="GO" id="GO:0009410">
    <property type="term" value="P:response to xenobiotic stimulus"/>
    <property type="evidence" value="ECO:0000270"/>
    <property type="project" value="RGD"/>
</dbReference>
<dbReference type="GO" id="GO:0002224">
    <property type="term" value="P:toll-like receptor signaling pathway"/>
    <property type="evidence" value="ECO:0000266"/>
    <property type="project" value="RGD"/>
</dbReference>
<dbReference type="GO" id="GO:0007296">
    <property type="term" value="P:vitellogenesis"/>
    <property type="evidence" value="ECO:0000266"/>
    <property type="project" value="RGD"/>
</dbReference>
<dbReference type="CDD" id="cd14721">
    <property type="entry name" value="bZIP_Fos"/>
    <property type="match status" value="1"/>
</dbReference>
<dbReference type="FunFam" id="1.20.5.170:FF:000006">
    <property type="entry name" value="fos-related antigen 2 isoform X1"/>
    <property type="match status" value="1"/>
</dbReference>
<dbReference type="Gene3D" id="1.20.5.170">
    <property type="match status" value="1"/>
</dbReference>
<dbReference type="InterPro" id="IPR000837">
    <property type="entry name" value="AP-1"/>
</dbReference>
<dbReference type="InterPro" id="IPR004827">
    <property type="entry name" value="bZIP"/>
</dbReference>
<dbReference type="InterPro" id="IPR046347">
    <property type="entry name" value="bZIP_sf"/>
</dbReference>
<dbReference type="PANTHER" id="PTHR23351">
    <property type="entry name" value="FOS TRANSCRIPTION FACTOR-RELATED"/>
    <property type="match status" value="1"/>
</dbReference>
<dbReference type="PANTHER" id="PTHR23351:SF6">
    <property type="entry name" value="FOS-RELATED ANTIGEN 1"/>
    <property type="match status" value="1"/>
</dbReference>
<dbReference type="Pfam" id="PF00170">
    <property type="entry name" value="bZIP_1"/>
    <property type="match status" value="1"/>
</dbReference>
<dbReference type="PRINTS" id="PR00042">
    <property type="entry name" value="LEUZIPPRFOS"/>
</dbReference>
<dbReference type="SMART" id="SM00338">
    <property type="entry name" value="BRLZ"/>
    <property type="match status" value="1"/>
</dbReference>
<dbReference type="SUPFAM" id="SSF57959">
    <property type="entry name" value="Leucine zipper domain"/>
    <property type="match status" value="1"/>
</dbReference>
<dbReference type="PROSITE" id="PS50217">
    <property type="entry name" value="BZIP"/>
    <property type="match status" value="1"/>
</dbReference>
<dbReference type="PROSITE" id="PS00036">
    <property type="entry name" value="BZIP_BASIC"/>
    <property type="match status" value="1"/>
</dbReference>
<keyword id="KW-0238">DNA-binding</keyword>
<keyword id="KW-0539">Nucleus</keyword>
<keyword id="KW-0597">Phosphoprotein</keyword>
<keyword id="KW-1185">Reference proteome</keyword>
<sequence>MYRDFGEPGPSSGAGSAYGRPAQPQQAQTQTVQQQKFHLVPSINAVSGSQELQWMVQPHFLGPSGYPRPLTYPQYSPPQPRPGVIRALGPPPGVRRRPCEQISPEEEERRRVRRERNKLAAAKCRNRRKELTDFLQAETDKLEDEKSGLQREIEELQKQKERLELVLEAHRPICKIPEEDKKDTGGTSSTSGAGSPPGPCRPVPCISLSPGPVLEPEALHTPTLMTTPSLTPFTPSLVFTYPSTPEPCSSAHRKSSSSSGDPSSDPLGSPTLLAL</sequence>
<proteinExistence type="evidence at transcript level"/>
<gene>
    <name type="primary">Fosl1</name>
    <name type="synonym">Fra1</name>
</gene>
<name>FOSL1_RAT</name>
<comment type="subunit">
    <text evidence="2 3">Heterodimer (By similarity). Interacts with the BAF multiprotein chromatin-remodeling complex subunits SMARCB1 and SMARCD1 (By similarity). Interacts with ARID1A and JUN (By similarity).</text>
</comment>
<comment type="subcellular location">
    <subcellularLocation>
        <location evidence="4">Nucleus</location>
    </subcellularLocation>
</comment>
<comment type="induction">
    <text evidence="7">By serum.</text>
</comment>
<comment type="similarity">
    <text evidence="8">Belongs to the bZIP family. Fos subfamily.</text>
</comment>
<organism>
    <name type="scientific">Rattus norvegicus</name>
    <name type="common">Rat</name>
    <dbReference type="NCBI Taxonomy" id="10116"/>
    <lineage>
        <taxon>Eukaryota</taxon>
        <taxon>Metazoa</taxon>
        <taxon>Chordata</taxon>
        <taxon>Craniata</taxon>
        <taxon>Vertebrata</taxon>
        <taxon>Euteleostomi</taxon>
        <taxon>Mammalia</taxon>
        <taxon>Eutheria</taxon>
        <taxon>Euarchontoglires</taxon>
        <taxon>Glires</taxon>
        <taxon>Rodentia</taxon>
        <taxon>Myomorpha</taxon>
        <taxon>Muroidea</taxon>
        <taxon>Muridae</taxon>
        <taxon>Murinae</taxon>
        <taxon>Rattus</taxon>
    </lineage>
</organism>
<evidence type="ECO:0000250" key="1">
    <source>
        <dbReference type="UniProtKB" id="P15407"/>
    </source>
</evidence>
<evidence type="ECO:0000250" key="2">
    <source>
        <dbReference type="UniProtKB" id="P47930"/>
    </source>
</evidence>
<evidence type="ECO:0000250" key="3">
    <source>
        <dbReference type="UniProtKB" id="P48755"/>
    </source>
</evidence>
<evidence type="ECO:0000250" key="4">
    <source>
        <dbReference type="UniProtKB" id="P51145"/>
    </source>
</evidence>
<evidence type="ECO:0000255" key="5">
    <source>
        <dbReference type="PROSITE-ProRule" id="PRU00978"/>
    </source>
</evidence>
<evidence type="ECO:0000256" key="6">
    <source>
        <dbReference type="SAM" id="MobiDB-lite"/>
    </source>
</evidence>
<evidence type="ECO:0000269" key="7">
    <source>
    </source>
</evidence>
<evidence type="ECO:0000305" key="8"/>